<proteinExistence type="inferred from homology"/>
<comment type="function">
    <text evidence="1">Catalyzes the reduction of arsenate [As(V)] to arsenite [As(III)].</text>
</comment>
<comment type="catalytic activity">
    <reaction evidence="1">
        <text>arsenate + [thioredoxin]-dithiol + H(+) = arsenite + [thioredoxin]-disulfide + H2O</text>
        <dbReference type="Rhea" id="RHEA:43848"/>
        <dbReference type="Rhea" id="RHEA-COMP:10698"/>
        <dbReference type="Rhea" id="RHEA-COMP:10700"/>
        <dbReference type="ChEBI" id="CHEBI:15377"/>
        <dbReference type="ChEBI" id="CHEBI:15378"/>
        <dbReference type="ChEBI" id="CHEBI:29242"/>
        <dbReference type="ChEBI" id="CHEBI:29950"/>
        <dbReference type="ChEBI" id="CHEBI:48597"/>
        <dbReference type="ChEBI" id="CHEBI:50058"/>
        <dbReference type="EC" id="1.20.4.4"/>
    </reaction>
</comment>
<comment type="subcellular location">
    <subcellularLocation>
        <location evidence="1">Cytoplasm</location>
    </subcellularLocation>
</comment>
<comment type="similarity">
    <text evidence="1">Belongs to the low molecular weight phosphotyrosine protein phosphatase family. Thioredoxin-coupled ArsC subfamily.</text>
</comment>
<reference key="1">
    <citation type="journal article" date="2005" name="J. Bacteriol.">
        <title>Insights on evolution of virulence and resistance from the complete genome analysis of an early methicillin-resistant Staphylococcus aureus strain and a biofilm-producing methicillin-resistant Staphylococcus epidermidis strain.</title>
        <authorList>
            <person name="Gill S.R."/>
            <person name="Fouts D.E."/>
            <person name="Archer G.L."/>
            <person name="Mongodin E.F."/>
            <person name="DeBoy R.T."/>
            <person name="Ravel J."/>
            <person name="Paulsen I.T."/>
            <person name="Kolonay J.F."/>
            <person name="Brinkac L.M."/>
            <person name="Beanan M.J."/>
            <person name="Dodson R.J."/>
            <person name="Daugherty S.C."/>
            <person name="Madupu R."/>
            <person name="Angiuoli S.V."/>
            <person name="Durkin A.S."/>
            <person name="Haft D.H."/>
            <person name="Vamathevan J.J."/>
            <person name="Khouri H."/>
            <person name="Utterback T.R."/>
            <person name="Lee C."/>
            <person name="Dimitrov G."/>
            <person name="Jiang L."/>
            <person name="Qin H."/>
            <person name="Weidman J."/>
            <person name="Tran K."/>
            <person name="Kang K.H."/>
            <person name="Hance I.R."/>
            <person name="Nelson K.E."/>
            <person name="Fraser C.M."/>
        </authorList>
    </citation>
    <scope>NUCLEOTIDE SEQUENCE [LARGE SCALE GENOMIC DNA]</scope>
    <source>
        <strain>COL</strain>
    </source>
</reference>
<dbReference type="EC" id="1.20.4.4" evidence="1"/>
<dbReference type="EMBL" id="CP000046">
    <property type="protein sequence ID" value="AAW38351.1"/>
    <property type="molecule type" value="Genomic_DNA"/>
</dbReference>
<dbReference type="RefSeq" id="WP_000163235.1">
    <property type="nucleotide sequence ID" value="NZ_JBGOFO010000008.1"/>
</dbReference>
<dbReference type="SMR" id="Q5HF01"/>
<dbReference type="KEGG" id="sac:SACOL1824"/>
<dbReference type="HOGENOM" id="CLU_071415_3_2_9"/>
<dbReference type="Proteomes" id="UP000000530">
    <property type="component" value="Chromosome"/>
</dbReference>
<dbReference type="GO" id="GO:0005737">
    <property type="term" value="C:cytoplasm"/>
    <property type="evidence" value="ECO:0007669"/>
    <property type="project" value="UniProtKB-SubCell"/>
</dbReference>
<dbReference type="GO" id="GO:0030612">
    <property type="term" value="F:arsenate reductase (thioredoxin) activity"/>
    <property type="evidence" value="ECO:0007669"/>
    <property type="project" value="UniProtKB-UniRule"/>
</dbReference>
<dbReference type="GO" id="GO:0004725">
    <property type="term" value="F:protein tyrosine phosphatase activity"/>
    <property type="evidence" value="ECO:0007669"/>
    <property type="project" value="InterPro"/>
</dbReference>
<dbReference type="GO" id="GO:0046685">
    <property type="term" value="P:response to arsenic-containing substance"/>
    <property type="evidence" value="ECO:0007669"/>
    <property type="project" value="UniProtKB-KW"/>
</dbReference>
<dbReference type="CDD" id="cd16345">
    <property type="entry name" value="LMWP_ArsC"/>
    <property type="match status" value="1"/>
</dbReference>
<dbReference type="FunFam" id="3.40.50.2300:FF:000237">
    <property type="entry name" value="Arsenate reductase"/>
    <property type="match status" value="1"/>
</dbReference>
<dbReference type="Gene3D" id="3.40.50.2300">
    <property type="match status" value="1"/>
</dbReference>
<dbReference type="HAMAP" id="MF_01624">
    <property type="entry name" value="Arsenate_reduct"/>
    <property type="match status" value="1"/>
</dbReference>
<dbReference type="InterPro" id="IPR014064">
    <property type="entry name" value="Arsenate_reductase_ArsC"/>
</dbReference>
<dbReference type="InterPro" id="IPR023485">
    <property type="entry name" value="Ptyr_pPase"/>
</dbReference>
<dbReference type="InterPro" id="IPR036196">
    <property type="entry name" value="Ptyr_pPase_sf"/>
</dbReference>
<dbReference type="NCBIfam" id="TIGR02691">
    <property type="entry name" value="arsC_pI258_fam"/>
    <property type="match status" value="1"/>
</dbReference>
<dbReference type="NCBIfam" id="NF010053">
    <property type="entry name" value="PRK13530.1"/>
    <property type="match status" value="1"/>
</dbReference>
<dbReference type="PANTHER" id="PTHR43428">
    <property type="entry name" value="ARSENATE REDUCTASE"/>
    <property type="match status" value="1"/>
</dbReference>
<dbReference type="PANTHER" id="PTHR43428:SF1">
    <property type="entry name" value="ARSENATE REDUCTASE"/>
    <property type="match status" value="1"/>
</dbReference>
<dbReference type="Pfam" id="PF01451">
    <property type="entry name" value="LMWPc"/>
    <property type="match status" value="1"/>
</dbReference>
<dbReference type="SMART" id="SM00226">
    <property type="entry name" value="LMWPc"/>
    <property type="match status" value="1"/>
</dbReference>
<dbReference type="SUPFAM" id="SSF52788">
    <property type="entry name" value="Phosphotyrosine protein phosphatases I"/>
    <property type="match status" value="1"/>
</dbReference>
<keyword id="KW-0059">Arsenical resistance</keyword>
<keyword id="KW-0963">Cytoplasm</keyword>
<keyword id="KW-1015">Disulfide bond</keyword>
<keyword id="KW-0560">Oxidoreductase</keyword>
<keyword id="KW-0676">Redox-active center</keyword>
<name>ARSC_STAAC</name>
<protein>
    <recommendedName>
        <fullName evidence="1">Arsenate reductase</fullName>
        <ecNumber evidence="1">1.20.4.4</ecNumber>
    </recommendedName>
</protein>
<evidence type="ECO:0000255" key="1">
    <source>
        <dbReference type="HAMAP-Rule" id="MF_01624"/>
    </source>
</evidence>
<sequence length="131" mass="14687">MTKKTIYFICTGNSCRSQMAEGWAKQILADDWNVYSAGIETHGVNPKAIEAMKEVGIDISNHTSDLIDNNIIKNSNLVVTLCSDADVNCPSLPTNVKKEHWGFDDPAGKPWSEFQRVRDEIKIAIENFKSR</sequence>
<organism>
    <name type="scientific">Staphylococcus aureus (strain COL)</name>
    <dbReference type="NCBI Taxonomy" id="93062"/>
    <lineage>
        <taxon>Bacteria</taxon>
        <taxon>Bacillati</taxon>
        <taxon>Bacillota</taxon>
        <taxon>Bacilli</taxon>
        <taxon>Bacillales</taxon>
        <taxon>Staphylococcaceae</taxon>
        <taxon>Staphylococcus</taxon>
    </lineage>
</organism>
<accession>Q5HF01</accession>
<feature type="chain" id="PRO_0000162524" description="Arsenate reductase">
    <location>
        <begin position="1"/>
        <end position="131"/>
    </location>
</feature>
<feature type="active site" description="Nucleophile" evidence="1">
    <location>
        <position position="10"/>
    </location>
</feature>
<feature type="active site" description="Nucleophile" evidence="1">
    <location>
        <position position="82"/>
    </location>
</feature>
<feature type="active site" description="Nucleophile" evidence="1">
    <location>
        <position position="89"/>
    </location>
</feature>
<feature type="disulfide bond" description="Redox-active; alternate" evidence="1">
    <location>
        <begin position="10"/>
        <end position="82"/>
    </location>
</feature>
<feature type="disulfide bond" description="Redox-active; alternate" evidence="1">
    <location>
        <begin position="82"/>
        <end position="89"/>
    </location>
</feature>
<gene>
    <name evidence="1" type="primary">arsC</name>
    <name type="ordered locus">SACOL1824</name>
</gene>